<accession>Q5HDX2</accession>
<feature type="chain" id="PRO_0000126483" description="Small ribosomal subunit protein uS8">
    <location>
        <begin position="1"/>
        <end position="132"/>
    </location>
</feature>
<keyword id="KW-0687">Ribonucleoprotein</keyword>
<keyword id="KW-0689">Ribosomal protein</keyword>
<keyword id="KW-0694">RNA-binding</keyword>
<keyword id="KW-0699">rRNA-binding</keyword>
<comment type="function">
    <text evidence="1">One of the primary rRNA binding proteins, it binds directly to 16S rRNA central domain where it helps coordinate assembly of the platform of the 30S subunit.</text>
</comment>
<comment type="subunit">
    <text evidence="1">Part of the 30S ribosomal subunit. Contacts proteins S5 and S12.</text>
</comment>
<comment type="similarity">
    <text evidence="1">Belongs to the universal ribosomal protein uS8 family.</text>
</comment>
<gene>
    <name evidence="1" type="primary">rpsH</name>
    <name type="ordered locus">SACOL2225</name>
</gene>
<protein>
    <recommendedName>
        <fullName evidence="1">Small ribosomal subunit protein uS8</fullName>
    </recommendedName>
    <alternativeName>
        <fullName evidence="2">30S ribosomal protein S8</fullName>
    </alternativeName>
</protein>
<sequence length="132" mass="14831">MTMTDPIADMLTRVRNANMVRHEKLELPASNIKKEIAEILKSEGFIKNVEYVEDDKQGVLRLFLKYGQNDERVITGLKRISKPGLRVYAKASEMPKVLNGLGIALVSTSEGVITDKEARKRNVGGEIIAYVW</sequence>
<dbReference type="EMBL" id="CP000046">
    <property type="protein sequence ID" value="AAW37100.1"/>
    <property type="molecule type" value="Genomic_DNA"/>
</dbReference>
<dbReference type="RefSeq" id="WP_000178881.1">
    <property type="nucleotide sequence ID" value="NZ_JBGOFO010000004.1"/>
</dbReference>
<dbReference type="SMR" id="Q5HDX2"/>
<dbReference type="GeneID" id="98346548"/>
<dbReference type="KEGG" id="sac:SACOL2225"/>
<dbReference type="HOGENOM" id="CLU_098428_0_2_9"/>
<dbReference type="Proteomes" id="UP000000530">
    <property type="component" value="Chromosome"/>
</dbReference>
<dbReference type="GO" id="GO:1990904">
    <property type="term" value="C:ribonucleoprotein complex"/>
    <property type="evidence" value="ECO:0007669"/>
    <property type="project" value="UniProtKB-KW"/>
</dbReference>
<dbReference type="GO" id="GO:0005840">
    <property type="term" value="C:ribosome"/>
    <property type="evidence" value="ECO:0007669"/>
    <property type="project" value="UniProtKB-KW"/>
</dbReference>
<dbReference type="GO" id="GO:0019843">
    <property type="term" value="F:rRNA binding"/>
    <property type="evidence" value="ECO:0007669"/>
    <property type="project" value="UniProtKB-UniRule"/>
</dbReference>
<dbReference type="GO" id="GO:0003735">
    <property type="term" value="F:structural constituent of ribosome"/>
    <property type="evidence" value="ECO:0007669"/>
    <property type="project" value="InterPro"/>
</dbReference>
<dbReference type="GO" id="GO:0006412">
    <property type="term" value="P:translation"/>
    <property type="evidence" value="ECO:0007669"/>
    <property type="project" value="UniProtKB-UniRule"/>
</dbReference>
<dbReference type="FunFam" id="3.30.1370.30:FF:000002">
    <property type="entry name" value="30S ribosomal protein S8"/>
    <property type="match status" value="1"/>
</dbReference>
<dbReference type="FunFam" id="3.30.1490.10:FF:000001">
    <property type="entry name" value="30S ribosomal protein S8"/>
    <property type="match status" value="1"/>
</dbReference>
<dbReference type="Gene3D" id="3.30.1370.30">
    <property type="match status" value="1"/>
</dbReference>
<dbReference type="Gene3D" id="3.30.1490.10">
    <property type="match status" value="1"/>
</dbReference>
<dbReference type="HAMAP" id="MF_01302_B">
    <property type="entry name" value="Ribosomal_uS8_B"/>
    <property type="match status" value="1"/>
</dbReference>
<dbReference type="InterPro" id="IPR000630">
    <property type="entry name" value="Ribosomal_uS8"/>
</dbReference>
<dbReference type="InterPro" id="IPR047863">
    <property type="entry name" value="Ribosomal_uS8_CS"/>
</dbReference>
<dbReference type="InterPro" id="IPR035987">
    <property type="entry name" value="Ribosomal_uS8_sf"/>
</dbReference>
<dbReference type="NCBIfam" id="NF001109">
    <property type="entry name" value="PRK00136.1"/>
    <property type="match status" value="1"/>
</dbReference>
<dbReference type="PANTHER" id="PTHR11758">
    <property type="entry name" value="40S RIBOSOMAL PROTEIN S15A"/>
    <property type="match status" value="1"/>
</dbReference>
<dbReference type="Pfam" id="PF00410">
    <property type="entry name" value="Ribosomal_S8"/>
    <property type="match status" value="1"/>
</dbReference>
<dbReference type="SUPFAM" id="SSF56047">
    <property type="entry name" value="Ribosomal protein S8"/>
    <property type="match status" value="1"/>
</dbReference>
<dbReference type="PROSITE" id="PS00053">
    <property type="entry name" value="RIBOSOMAL_S8"/>
    <property type="match status" value="1"/>
</dbReference>
<organism>
    <name type="scientific">Staphylococcus aureus (strain COL)</name>
    <dbReference type="NCBI Taxonomy" id="93062"/>
    <lineage>
        <taxon>Bacteria</taxon>
        <taxon>Bacillati</taxon>
        <taxon>Bacillota</taxon>
        <taxon>Bacilli</taxon>
        <taxon>Bacillales</taxon>
        <taxon>Staphylococcaceae</taxon>
        <taxon>Staphylococcus</taxon>
    </lineage>
</organism>
<proteinExistence type="inferred from homology"/>
<reference key="1">
    <citation type="journal article" date="2005" name="J. Bacteriol.">
        <title>Insights on evolution of virulence and resistance from the complete genome analysis of an early methicillin-resistant Staphylococcus aureus strain and a biofilm-producing methicillin-resistant Staphylococcus epidermidis strain.</title>
        <authorList>
            <person name="Gill S.R."/>
            <person name="Fouts D.E."/>
            <person name="Archer G.L."/>
            <person name="Mongodin E.F."/>
            <person name="DeBoy R.T."/>
            <person name="Ravel J."/>
            <person name="Paulsen I.T."/>
            <person name="Kolonay J.F."/>
            <person name="Brinkac L.M."/>
            <person name="Beanan M.J."/>
            <person name="Dodson R.J."/>
            <person name="Daugherty S.C."/>
            <person name="Madupu R."/>
            <person name="Angiuoli S.V."/>
            <person name="Durkin A.S."/>
            <person name="Haft D.H."/>
            <person name="Vamathevan J.J."/>
            <person name="Khouri H."/>
            <person name="Utterback T.R."/>
            <person name="Lee C."/>
            <person name="Dimitrov G."/>
            <person name="Jiang L."/>
            <person name="Qin H."/>
            <person name="Weidman J."/>
            <person name="Tran K."/>
            <person name="Kang K.H."/>
            <person name="Hance I.R."/>
            <person name="Nelson K.E."/>
            <person name="Fraser C.M."/>
        </authorList>
    </citation>
    <scope>NUCLEOTIDE SEQUENCE [LARGE SCALE GENOMIC DNA]</scope>
    <source>
        <strain>COL</strain>
    </source>
</reference>
<name>RS8_STAAC</name>
<evidence type="ECO:0000255" key="1">
    <source>
        <dbReference type="HAMAP-Rule" id="MF_01302"/>
    </source>
</evidence>
<evidence type="ECO:0000305" key="2"/>